<name>MED20_AEDAE</name>
<organism>
    <name type="scientific">Aedes aegypti</name>
    <name type="common">Yellowfever mosquito</name>
    <name type="synonym">Culex aegypti</name>
    <dbReference type="NCBI Taxonomy" id="7159"/>
    <lineage>
        <taxon>Eukaryota</taxon>
        <taxon>Metazoa</taxon>
        <taxon>Ecdysozoa</taxon>
        <taxon>Arthropoda</taxon>
        <taxon>Hexapoda</taxon>
        <taxon>Insecta</taxon>
        <taxon>Pterygota</taxon>
        <taxon>Neoptera</taxon>
        <taxon>Endopterygota</taxon>
        <taxon>Diptera</taxon>
        <taxon>Nematocera</taxon>
        <taxon>Culicoidea</taxon>
        <taxon>Culicidae</taxon>
        <taxon>Culicinae</taxon>
        <taxon>Aedini</taxon>
        <taxon>Aedes</taxon>
        <taxon>Stegomyia</taxon>
    </lineage>
</organism>
<evidence type="ECO:0000250" key="1"/>
<evidence type="ECO:0000305" key="2"/>
<reference key="1">
    <citation type="journal article" date="2007" name="Science">
        <title>Genome sequence of Aedes aegypti, a major arbovirus vector.</title>
        <authorList>
            <person name="Nene V."/>
            <person name="Wortman J.R."/>
            <person name="Lawson D."/>
            <person name="Haas B.J."/>
            <person name="Kodira C.D."/>
            <person name="Tu Z.J."/>
            <person name="Loftus B.J."/>
            <person name="Xi Z."/>
            <person name="Megy K."/>
            <person name="Grabherr M."/>
            <person name="Ren Q."/>
            <person name="Zdobnov E.M."/>
            <person name="Lobo N.F."/>
            <person name="Campbell K.S."/>
            <person name="Brown S.E."/>
            <person name="Bonaldo M.F."/>
            <person name="Zhu J."/>
            <person name="Sinkins S.P."/>
            <person name="Hogenkamp D.G."/>
            <person name="Amedeo P."/>
            <person name="Arensburger P."/>
            <person name="Atkinson P.W."/>
            <person name="Bidwell S.L."/>
            <person name="Biedler J."/>
            <person name="Birney E."/>
            <person name="Bruggner R.V."/>
            <person name="Costas J."/>
            <person name="Coy M.R."/>
            <person name="Crabtree J."/>
            <person name="Crawford M."/>
            <person name="DeBruyn B."/>
            <person name="DeCaprio D."/>
            <person name="Eiglmeier K."/>
            <person name="Eisenstadt E."/>
            <person name="El-Dorry H."/>
            <person name="Gelbart W.M."/>
            <person name="Gomes S.L."/>
            <person name="Hammond M."/>
            <person name="Hannick L.I."/>
            <person name="Hogan J.R."/>
            <person name="Holmes M.H."/>
            <person name="Jaffe D."/>
            <person name="Johnston S.J."/>
            <person name="Kennedy R.C."/>
            <person name="Koo H."/>
            <person name="Kravitz S."/>
            <person name="Kriventseva E.V."/>
            <person name="Kulp D."/>
            <person name="Labutti K."/>
            <person name="Lee E."/>
            <person name="Li S."/>
            <person name="Lovin D.D."/>
            <person name="Mao C."/>
            <person name="Mauceli E."/>
            <person name="Menck C.F."/>
            <person name="Miller J.R."/>
            <person name="Montgomery P."/>
            <person name="Mori A."/>
            <person name="Nascimento A.L."/>
            <person name="Naveira H.F."/>
            <person name="Nusbaum C."/>
            <person name="O'Leary S.B."/>
            <person name="Orvis J."/>
            <person name="Pertea M."/>
            <person name="Quesneville H."/>
            <person name="Reidenbach K.R."/>
            <person name="Rogers Y.-H.C."/>
            <person name="Roth C.W."/>
            <person name="Schneider J.R."/>
            <person name="Schatz M."/>
            <person name="Shumway M."/>
            <person name="Stanke M."/>
            <person name="Stinson E.O."/>
            <person name="Tubio J.M.C."/>
            <person name="Vanzee J.P."/>
            <person name="Verjovski-Almeida S."/>
            <person name="Werner D."/>
            <person name="White O.R."/>
            <person name="Wyder S."/>
            <person name="Zeng Q."/>
            <person name="Zhao Q."/>
            <person name="Zhao Y."/>
            <person name="Hill C.A."/>
            <person name="Raikhel A.S."/>
            <person name="Soares M.B."/>
            <person name="Knudson D.L."/>
            <person name="Lee N.H."/>
            <person name="Galagan J."/>
            <person name="Salzberg S.L."/>
            <person name="Paulsen I.T."/>
            <person name="Dimopoulos G."/>
            <person name="Collins F.H."/>
            <person name="Bruce B."/>
            <person name="Fraser-Liggett C.M."/>
            <person name="Severson D.W."/>
        </authorList>
    </citation>
    <scope>NUCLEOTIDE SEQUENCE [LARGE SCALE GENOMIC DNA]</scope>
    <source>
        <strain>LVPib12</strain>
    </source>
</reference>
<feature type="chain" id="PRO_0000308561" description="Mediator of RNA polymerase II transcription subunit 20">
    <location>
        <begin position="1"/>
        <end position="219"/>
    </location>
</feature>
<dbReference type="EMBL" id="CH477213">
    <property type="protein sequence ID" value="EAT47633.1"/>
    <property type="molecule type" value="Genomic_DNA"/>
</dbReference>
<dbReference type="SMR" id="Q17LR9"/>
<dbReference type="FunCoup" id="Q17LR9">
    <property type="interactions" value="2325"/>
</dbReference>
<dbReference type="STRING" id="7159.Q17LR9"/>
<dbReference type="PaxDb" id="7159-AAEL001260-PA"/>
<dbReference type="EnsemblMetazoa" id="AAEL001260-RA">
    <property type="protein sequence ID" value="AAEL001260-PA"/>
    <property type="gene ID" value="AAEL001260"/>
</dbReference>
<dbReference type="GeneID" id="5569601"/>
<dbReference type="KEGG" id="aag:5569601"/>
<dbReference type="CTD" id="9477"/>
<dbReference type="VEuPathDB" id="VectorBase:AAEL001260"/>
<dbReference type="eggNOG" id="KOG4309">
    <property type="taxonomic scope" value="Eukaryota"/>
</dbReference>
<dbReference type="HOGENOM" id="CLU_080044_1_0_1"/>
<dbReference type="InParanoid" id="Q17LR9"/>
<dbReference type="OMA" id="NDIYEPM"/>
<dbReference type="OrthoDB" id="1854899at2759"/>
<dbReference type="PhylomeDB" id="Q17LR9"/>
<dbReference type="Proteomes" id="UP000008820">
    <property type="component" value="Chromosome 2"/>
</dbReference>
<dbReference type="Proteomes" id="UP000682892">
    <property type="component" value="Unassembled WGS sequence"/>
</dbReference>
<dbReference type="GO" id="GO:0016592">
    <property type="term" value="C:mediator complex"/>
    <property type="evidence" value="ECO:0007669"/>
    <property type="project" value="InterPro"/>
</dbReference>
<dbReference type="GO" id="GO:0003713">
    <property type="term" value="F:transcription coactivator activity"/>
    <property type="evidence" value="ECO:0007669"/>
    <property type="project" value="TreeGrafter"/>
</dbReference>
<dbReference type="GO" id="GO:0006357">
    <property type="term" value="P:regulation of transcription by RNA polymerase II"/>
    <property type="evidence" value="ECO:0007669"/>
    <property type="project" value="InterPro"/>
</dbReference>
<dbReference type="InterPro" id="IPR013921">
    <property type="entry name" value="Mediator_Med20"/>
</dbReference>
<dbReference type="PANTHER" id="PTHR12465:SF0">
    <property type="entry name" value="MEDIATOR OF RNA POLYMERASE II TRANSCRIPTION SUBUNIT 20"/>
    <property type="match status" value="1"/>
</dbReference>
<dbReference type="PANTHER" id="PTHR12465">
    <property type="entry name" value="UBIQUITIN SPECIFIC PROTEASE HOMOLOG 49"/>
    <property type="match status" value="1"/>
</dbReference>
<dbReference type="Pfam" id="PF08612">
    <property type="entry name" value="Med20"/>
    <property type="match status" value="1"/>
</dbReference>
<keyword id="KW-0010">Activator</keyword>
<keyword id="KW-0539">Nucleus</keyword>
<keyword id="KW-1185">Reference proteome</keyword>
<keyword id="KW-0804">Transcription</keyword>
<keyword id="KW-0805">Transcription regulation</keyword>
<accession>Q17LR9</accession>
<comment type="function">
    <text evidence="1">Component of the Mediator complex, a coactivator involved in the regulated transcription of nearly all RNA polymerase II-dependent genes. Mediator functions as a bridge to convey information from gene-specific regulatory proteins to the basal RNA polymerase II transcription machinery. Mediator is recruited to promoters by direct interactions with regulatory proteins and serves as a scaffold for the assembly of a functional preinitiation complex with RNA polymerase II and the general transcription factors (By similarity).</text>
</comment>
<comment type="subunit">
    <text evidence="1">Component of the Mediator complex.</text>
</comment>
<comment type="subcellular location">
    <subcellularLocation>
        <location evidence="2">Nucleus</location>
    </subcellularLocation>
</comment>
<comment type="similarity">
    <text evidence="2">Belongs to the Mediator complex subunit 20 family.</text>
</comment>
<gene>
    <name type="primary">MED20</name>
    <name type="ORF">AAEL001260</name>
</gene>
<proteinExistence type="inferred from homology"/>
<sequence length="219" mass="24518">MGVTILQPYPVENKSGAQTIEFLVKRVLALGAVQVGHFLVDCETYTSIPQIGATKTVHILHNSEQPASVFSILDTGTKQIPLVTDGLFDLLMTRISPVYTSKKQTKIESKGPRFEFGDFLIKLGSVTMSQNFKGVLVEVEYRPCLVASSCWELMREFLQGFLGSNVSNTIPAYFAQRININTNHTKANDVYQPIDTINQYLEHFTNYRKQTTPVVAPRV</sequence>
<protein>
    <recommendedName>
        <fullName>Mediator of RNA polymerase II transcription subunit 20</fullName>
    </recommendedName>
    <alternativeName>
        <fullName>Mediator complex subunit 20</fullName>
    </alternativeName>
</protein>